<name>DCD_CHLFF</name>
<comment type="function">
    <text evidence="1">Catalyzes the deamination of dCTP to dUTP.</text>
</comment>
<comment type="catalytic activity">
    <reaction evidence="1">
        <text>dCTP + H2O + H(+) = dUTP + NH4(+)</text>
        <dbReference type="Rhea" id="RHEA:22680"/>
        <dbReference type="ChEBI" id="CHEBI:15377"/>
        <dbReference type="ChEBI" id="CHEBI:15378"/>
        <dbReference type="ChEBI" id="CHEBI:28938"/>
        <dbReference type="ChEBI" id="CHEBI:61481"/>
        <dbReference type="ChEBI" id="CHEBI:61555"/>
        <dbReference type="EC" id="3.5.4.13"/>
    </reaction>
</comment>
<comment type="pathway">
    <text evidence="1">Pyrimidine metabolism; dUMP biosynthesis; dUMP from dCTP (dUTP route): step 1/2.</text>
</comment>
<comment type="subunit">
    <text evidence="1">Homotrimer.</text>
</comment>
<comment type="similarity">
    <text evidence="1">Belongs to the dCTP deaminase family.</text>
</comment>
<protein>
    <recommendedName>
        <fullName evidence="1">dCTP deaminase</fullName>
        <ecNumber evidence="1">3.5.4.13</ecNumber>
    </recommendedName>
    <alternativeName>
        <fullName evidence="1">Deoxycytidine triphosphate deaminase</fullName>
    </alternativeName>
</protein>
<reference key="1">
    <citation type="journal article" date="2006" name="DNA Res.">
        <title>Genome sequence of the cat pathogen, Chlamydophila felis.</title>
        <authorList>
            <person name="Azuma Y."/>
            <person name="Hirakawa H."/>
            <person name="Yamashita A."/>
            <person name="Cai Y."/>
            <person name="Rahman M.A."/>
            <person name="Suzuki H."/>
            <person name="Mitaku S."/>
            <person name="Toh H."/>
            <person name="Goto S."/>
            <person name="Murakami T."/>
            <person name="Sugi K."/>
            <person name="Hayashi H."/>
            <person name="Fukushi H."/>
            <person name="Hattori M."/>
            <person name="Kuhara S."/>
            <person name="Shirai M."/>
        </authorList>
    </citation>
    <scope>NUCLEOTIDE SEQUENCE [LARGE SCALE GENOMIC DNA]</scope>
    <source>
        <strain>Fe/C-56</strain>
    </source>
</reference>
<feature type="chain" id="PRO_1000009704" description="dCTP deaminase">
    <location>
        <begin position="1"/>
        <end position="190"/>
    </location>
</feature>
<feature type="active site" description="Proton donor/acceptor" evidence="1">
    <location>
        <position position="139"/>
    </location>
</feature>
<feature type="binding site" evidence="1">
    <location>
        <begin position="113"/>
        <end position="118"/>
    </location>
    <ligand>
        <name>dCTP</name>
        <dbReference type="ChEBI" id="CHEBI:61481"/>
    </ligand>
</feature>
<feature type="binding site" evidence="1">
    <location>
        <position position="158"/>
    </location>
    <ligand>
        <name>dCTP</name>
        <dbReference type="ChEBI" id="CHEBI:61481"/>
    </ligand>
</feature>
<feature type="binding site" evidence="1">
    <location>
        <position position="172"/>
    </location>
    <ligand>
        <name>dCTP</name>
        <dbReference type="ChEBI" id="CHEBI:61481"/>
    </ligand>
</feature>
<feature type="binding site" evidence="1">
    <location>
        <position position="181"/>
    </location>
    <ligand>
        <name>dCTP</name>
        <dbReference type="ChEBI" id="CHEBI:61481"/>
    </ligand>
</feature>
<feature type="binding site" evidence="1">
    <location>
        <position position="182"/>
    </location>
    <ligand>
        <name>dCTP</name>
        <dbReference type="ChEBI" id="CHEBI:61481"/>
    </ligand>
</feature>
<sequence length="190" mass="21591">MSIKEDKWIRKMAQTHGMIEPFADGQVNIDAETGEKLISYGLSSYGYDLRLSREFKVFTNVYNSLVDPKHFTEDTFISITDDVCIIPPNSFALAHSVEYFRIPRNVLTMCIGKSTYARCGLIVNVTPFEPEWEGYVTIEISNTTPLPAKIYANEGIAQVLFFEADEMCEVSYAERKGKYQKQQGITVPFV</sequence>
<accession>Q254B3</accession>
<organism>
    <name type="scientific">Chlamydia felis (strain Fe/C-56)</name>
    <name type="common">Chlamydophila felis</name>
    <dbReference type="NCBI Taxonomy" id="264202"/>
    <lineage>
        <taxon>Bacteria</taxon>
        <taxon>Pseudomonadati</taxon>
        <taxon>Chlamydiota</taxon>
        <taxon>Chlamydiia</taxon>
        <taxon>Chlamydiales</taxon>
        <taxon>Chlamydiaceae</taxon>
        <taxon>Chlamydia/Chlamydophila group</taxon>
        <taxon>Chlamydia</taxon>
    </lineage>
</organism>
<evidence type="ECO:0000255" key="1">
    <source>
        <dbReference type="HAMAP-Rule" id="MF_00146"/>
    </source>
</evidence>
<keyword id="KW-0378">Hydrolase</keyword>
<keyword id="KW-0546">Nucleotide metabolism</keyword>
<keyword id="KW-0547">Nucleotide-binding</keyword>
<proteinExistence type="inferred from homology"/>
<gene>
    <name evidence="1" type="primary">dcd</name>
    <name type="ordered locus">CF0603</name>
</gene>
<dbReference type="EC" id="3.5.4.13" evidence="1"/>
<dbReference type="EMBL" id="AP006861">
    <property type="protein sequence ID" value="BAE81375.1"/>
    <property type="molecule type" value="Genomic_DNA"/>
</dbReference>
<dbReference type="RefSeq" id="WP_011458155.1">
    <property type="nucleotide sequence ID" value="NC_007899.1"/>
</dbReference>
<dbReference type="SMR" id="Q254B3"/>
<dbReference type="STRING" id="264202.CF0603"/>
<dbReference type="KEGG" id="cfe:CF0603"/>
<dbReference type="eggNOG" id="COG0717">
    <property type="taxonomic scope" value="Bacteria"/>
</dbReference>
<dbReference type="HOGENOM" id="CLU_087476_4_0_0"/>
<dbReference type="OrthoDB" id="9780202at2"/>
<dbReference type="UniPathway" id="UPA00610">
    <property type="reaction ID" value="UER00665"/>
</dbReference>
<dbReference type="Proteomes" id="UP000001260">
    <property type="component" value="Chromosome"/>
</dbReference>
<dbReference type="GO" id="GO:0008829">
    <property type="term" value="F:dCTP deaminase activity"/>
    <property type="evidence" value="ECO:0007669"/>
    <property type="project" value="UniProtKB-UniRule"/>
</dbReference>
<dbReference type="GO" id="GO:0000166">
    <property type="term" value="F:nucleotide binding"/>
    <property type="evidence" value="ECO:0007669"/>
    <property type="project" value="UniProtKB-KW"/>
</dbReference>
<dbReference type="GO" id="GO:0006226">
    <property type="term" value="P:dUMP biosynthetic process"/>
    <property type="evidence" value="ECO:0007669"/>
    <property type="project" value="UniProtKB-UniPathway"/>
</dbReference>
<dbReference type="GO" id="GO:0006229">
    <property type="term" value="P:dUTP biosynthetic process"/>
    <property type="evidence" value="ECO:0007669"/>
    <property type="project" value="UniProtKB-UniRule"/>
</dbReference>
<dbReference type="GO" id="GO:0015949">
    <property type="term" value="P:nucleobase-containing small molecule interconversion"/>
    <property type="evidence" value="ECO:0007669"/>
    <property type="project" value="TreeGrafter"/>
</dbReference>
<dbReference type="CDD" id="cd07557">
    <property type="entry name" value="trimeric_dUTPase"/>
    <property type="match status" value="1"/>
</dbReference>
<dbReference type="FunFam" id="2.70.40.10:FF:000001">
    <property type="entry name" value="dCTP deaminase"/>
    <property type="match status" value="1"/>
</dbReference>
<dbReference type="Gene3D" id="2.70.40.10">
    <property type="match status" value="1"/>
</dbReference>
<dbReference type="HAMAP" id="MF_00146">
    <property type="entry name" value="dCTP_deaminase"/>
    <property type="match status" value="1"/>
</dbReference>
<dbReference type="InterPro" id="IPR011962">
    <property type="entry name" value="dCTP_deaminase"/>
</dbReference>
<dbReference type="InterPro" id="IPR036157">
    <property type="entry name" value="dUTPase-like_sf"/>
</dbReference>
<dbReference type="InterPro" id="IPR033704">
    <property type="entry name" value="dUTPase_trimeric"/>
</dbReference>
<dbReference type="NCBIfam" id="TIGR02274">
    <property type="entry name" value="dCTP_deam"/>
    <property type="match status" value="1"/>
</dbReference>
<dbReference type="PANTHER" id="PTHR42680">
    <property type="entry name" value="DCTP DEAMINASE"/>
    <property type="match status" value="1"/>
</dbReference>
<dbReference type="PANTHER" id="PTHR42680:SF3">
    <property type="entry name" value="DCTP DEAMINASE"/>
    <property type="match status" value="1"/>
</dbReference>
<dbReference type="Pfam" id="PF22769">
    <property type="entry name" value="DCD"/>
    <property type="match status" value="1"/>
</dbReference>
<dbReference type="SUPFAM" id="SSF51283">
    <property type="entry name" value="dUTPase-like"/>
    <property type="match status" value="1"/>
</dbReference>